<feature type="chain" id="PRO_0000072860" description="Glycine--tRNA ligase alpha subunit">
    <location>
        <begin position="1"/>
        <end position="288"/>
    </location>
</feature>
<evidence type="ECO:0000255" key="1">
    <source>
        <dbReference type="HAMAP-Rule" id="MF_00254"/>
    </source>
</evidence>
<name>SYGA_RICCN</name>
<gene>
    <name evidence="1" type="primary">glyQ</name>
    <name type="ordered locus">RC1317</name>
</gene>
<accession>Q92G10</accession>
<protein>
    <recommendedName>
        <fullName evidence="1">Glycine--tRNA ligase alpha subunit</fullName>
        <ecNumber evidence="1">6.1.1.14</ecNumber>
    </recommendedName>
    <alternativeName>
        <fullName evidence="1">Glycyl-tRNA synthetase alpha subunit</fullName>
        <shortName evidence="1">GlyRS</shortName>
    </alternativeName>
</protein>
<comment type="catalytic activity">
    <reaction evidence="1">
        <text>tRNA(Gly) + glycine + ATP = glycyl-tRNA(Gly) + AMP + diphosphate</text>
        <dbReference type="Rhea" id="RHEA:16013"/>
        <dbReference type="Rhea" id="RHEA-COMP:9664"/>
        <dbReference type="Rhea" id="RHEA-COMP:9683"/>
        <dbReference type="ChEBI" id="CHEBI:30616"/>
        <dbReference type="ChEBI" id="CHEBI:33019"/>
        <dbReference type="ChEBI" id="CHEBI:57305"/>
        <dbReference type="ChEBI" id="CHEBI:78442"/>
        <dbReference type="ChEBI" id="CHEBI:78522"/>
        <dbReference type="ChEBI" id="CHEBI:456215"/>
        <dbReference type="EC" id="6.1.1.14"/>
    </reaction>
</comment>
<comment type="subunit">
    <text evidence="1">Tetramer of two alpha and two beta subunits.</text>
</comment>
<comment type="subcellular location">
    <subcellularLocation>
        <location evidence="1">Cytoplasm</location>
    </subcellularLocation>
</comment>
<comment type="similarity">
    <text evidence="1">Belongs to the class-II aminoacyl-tRNA synthetase family.</text>
</comment>
<keyword id="KW-0030">Aminoacyl-tRNA synthetase</keyword>
<keyword id="KW-0067">ATP-binding</keyword>
<keyword id="KW-0963">Cytoplasm</keyword>
<keyword id="KW-0436">Ligase</keyword>
<keyword id="KW-0547">Nucleotide-binding</keyword>
<keyword id="KW-0648">Protein biosynthesis</keyword>
<organism>
    <name type="scientific">Rickettsia conorii (strain ATCC VR-613 / Malish 7)</name>
    <dbReference type="NCBI Taxonomy" id="272944"/>
    <lineage>
        <taxon>Bacteria</taxon>
        <taxon>Pseudomonadati</taxon>
        <taxon>Pseudomonadota</taxon>
        <taxon>Alphaproteobacteria</taxon>
        <taxon>Rickettsiales</taxon>
        <taxon>Rickettsiaceae</taxon>
        <taxon>Rickettsieae</taxon>
        <taxon>Rickettsia</taxon>
        <taxon>spotted fever group</taxon>
    </lineage>
</organism>
<proteinExistence type="inferred from homology"/>
<dbReference type="EC" id="6.1.1.14" evidence="1"/>
<dbReference type="EMBL" id="AE006914">
    <property type="protein sequence ID" value="AAL03855.1"/>
    <property type="molecule type" value="Genomic_DNA"/>
</dbReference>
<dbReference type="PIR" id="E97864">
    <property type="entry name" value="E97864"/>
</dbReference>
<dbReference type="RefSeq" id="WP_010977874.1">
    <property type="nucleotide sequence ID" value="NC_003103.1"/>
</dbReference>
<dbReference type="SMR" id="Q92G10"/>
<dbReference type="GeneID" id="928468"/>
<dbReference type="KEGG" id="rco:RC1317"/>
<dbReference type="HOGENOM" id="CLU_057066_1_0_5"/>
<dbReference type="Proteomes" id="UP000000816">
    <property type="component" value="Chromosome"/>
</dbReference>
<dbReference type="GO" id="GO:0005829">
    <property type="term" value="C:cytosol"/>
    <property type="evidence" value="ECO:0007669"/>
    <property type="project" value="TreeGrafter"/>
</dbReference>
<dbReference type="GO" id="GO:0005524">
    <property type="term" value="F:ATP binding"/>
    <property type="evidence" value="ECO:0007669"/>
    <property type="project" value="UniProtKB-UniRule"/>
</dbReference>
<dbReference type="GO" id="GO:0004820">
    <property type="term" value="F:glycine-tRNA ligase activity"/>
    <property type="evidence" value="ECO:0007669"/>
    <property type="project" value="UniProtKB-UniRule"/>
</dbReference>
<dbReference type="GO" id="GO:0006426">
    <property type="term" value="P:glycyl-tRNA aminoacylation"/>
    <property type="evidence" value="ECO:0007669"/>
    <property type="project" value="UniProtKB-UniRule"/>
</dbReference>
<dbReference type="FunFam" id="3.30.930.10:FF:000006">
    <property type="entry name" value="Glycine--tRNA ligase alpha subunit"/>
    <property type="match status" value="1"/>
</dbReference>
<dbReference type="Gene3D" id="3.30.930.10">
    <property type="entry name" value="Bira Bifunctional Protein, Domain 2"/>
    <property type="match status" value="1"/>
</dbReference>
<dbReference type="Gene3D" id="1.20.58.180">
    <property type="entry name" value="Class II aaRS and biotin synthetases, domain 2"/>
    <property type="match status" value="1"/>
</dbReference>
<dbReference type="HAMAP" id="MF_00254">
    <property type="entry name" value="Gly_tRNA_synth_alpha"/>
    <property type="match status" value="1"/>
</dbReference>
<dbReference type="InterPro" id="IPR045864">
    <property type="entry name" value="aa-tRNA-synth_II/BPL/LPL"/>
</dbReference>
<dbReference type="InterPro" id="IPR006194">
    <property type="entry name" value="Gly-tRNA-synth_heterodimer"/>
</dbReference>
<dbReference type="InterPro" id="IPR002310">
    <property type="entry name" value="Gly-tRNA_ligase_asu"/>
</dbReference>
<dbReference type="NCBIfam" id="TIGR00388">
    <property type="entry name" value="glyQ"/>
    <property type="match status" value="1"/>
</dbReference>
<dbReference type="NCBIfam" id="NF006827">
    <property type="entry name" value="PRK09348.1"/>
    <property type="match status" value="1"/>
</dbReference>
<dbReference type="PANTHER" id="PTHR30075:SF2">
    <property type="entry name" value="GLYCINE--TRNA LIGASE, CHLOROPLASTIC_MITOCHONDRIAL 2"/>
    <property type="match status" value="1"/>
</dbReference>
<dbReference type="PANTHER" id="PTHR30075">
    <property type="entry name" value="GLYCYL-TRNA SYNTHETASE"/>
    <property type="match status" value="1"/>
</dbReference>
<dbReference type="Pfam" id="PF02091">
    <property type="entry name" value="tRNA-synt_2e"/>
    <property type="match status" value="1"/>
</dbReference>
<dbReference type="PRINTS" id="PR01044">
    <property type="entry name" value="TRNASYNTHGA"/>
</dbReference>
<dbReference type="SUPFAM" id="SSF55681">
    <property type="entry name" value="Class II aaRS and biotin synthetases"/>
    <property type="match status" value="1"/>
</dbReference>
<dbReference type="PROSITE" id="PS50861">
    <property type="entry name" value="AA_TRNA_LIGASE_II_GLYAB"/>
    <property type="match status" value="1"/>
</dbReference>
<reference key="1">
    <citation type="journal article" date="2001" name="Science">
        <title>Mechanisms of evolution in Rickettsia conorii and R. prowazekii.</title>
        <authorList>
            <person name="Ogata H."/>
            <person name="Audic S."/>
            <person name="Renesto-Audiffren P."/>
            <person name="Fournier P.-E."/>
            <person name="Barbe V."/>
            <person name="Samson D."/>
            <person name="Roux V."/>
            <person name="Cossart P."/>
            <person name="Weissenbach J."/>
            <person name="Claverie J.-M."/>
            <person name="Raoult D."/>
        </authorList>
    </citation>
    <scope>NUCLEOTIDE SEQUENCE [LARGE SCALE GENOMIC DNA]</scope>
    <source>
        <strain>ATCC VR-613 / Malish 7</strain>
    </source>
</reference>
<sequence length="288" mass="33027">MKKLSFQQIILTLQNYWQDYGCAILQPYDAHVGAGTFHPATVLRCLGTKPWSVAYVQPSRRPGDSRYGMHPNRMQHYYQFQVILKPSPDNIQELYLKSLECLGIDLKIHDIRFVEDDWESPTLGAAGLGWEVWCNGMEVSQFTYMQQIGGIECRPVAGEITYGLERLALYIQGVDEVRELDWSGQVGEKALKYGEVDFEAEGQFSKYNLELADSEMLLRHFKDSEDQCERLIKANLPMPAYDECLKASHAFNQLNALGVISVTERASYVLRVRHLARICCTKWLEMNK</sequence>